<proteinExistence type="evidence at protein level"/>
<gene>
    <name type="primary">MUD1</name>
    <name type="ordered locus">YBR119W</name>
    <name type="ORF">YBR0915</name>
</gene>
<evidence type="ECO:0000250" key="1"/>
<evidence type="ECO:0000255" key="2">
    <source>
        <dbReference type="PROSITE-ProRule" id="PRU00176"/>
    </source>
</evidence>
<evidence type="ECO:0000269" key="3">
    <source>
    </source>
</evidence>
<evidence type="ECO:0000269" key="4">
    <source>
    </source>
</evidence>
<evidence type="ECO:0000269" key="5">
    <source>
    </source>
</evidence>
<evidence type="ECO:0000269" key="6">
    <source>
    </source>
</evidence>
<evidence type="ECO:0000269" key="7">
    <source>
    </source>
</evidence>
<evidence type="ECO:0000305" key="8"/>
<evidence type="ECO:0007829" key="9">
    <source>
        <dbReference type="PDB" id="5ZWN"/>
    </source>
</evidence>
<evidence type="ECO:0007829" key="10">
    <source>
        <dbReference type="PDB" id="6N7R"/>
    </source>
</evidence>
<keyword id="KW-0002">3D-structure</keyword>
<keyword id="KW-0507">mRNA processing</keyword>
<keyword id="KW-0508">mRNA splicing</keyword>
<keyword id="KW-0539">Nucleus</keyword>
<keyword id="KW-1185">Reference proteome</keyword>
<keyword id="KW-0677">Repeat</keyword>
<keyword id="KW-0687">Ribonucleoprotein</keyword>
<keyword id="KW-0694">RNA-binding</keyword>
<keyword id="KW-0747">Spliceosome</keyword>
<accession>P32605</accession>
<accession>D6VQB7</accession>
<feature type="chain" id="PRO_0000081891" description="U1 small nuclear ribonucleoprotein A">
    <location>
        <begin position="1"/>
        <end position="298"/>
    </location>
</feature>
<feature type="domain" description="RRM 1" evidence="2">
    <location>
        <begin position="2"/>
        <end position="113"/>
    </location>
</feature>
<feature type="domain" description="RRM 2" evidence="2">
    <location>
        <begin position="227"/>
        <end position="298"/>
    </location>
</feature>
<feature type="mutagenesis site" description="Sensitive in DMS protection of U1 snRNA; when associated with 6-I-N-7." evidence="6">
    <original>L</original>
    <variation>I</variation>
    <location>
        <position position="4"/>
    </location>
</feature>
<feature type="mutagenesis site" description="Sensitive in DMS protection of U1 snRNA; when associated with I-4." evidence="6">
    <original>FQ</original>
    <variation>IN</variation>
    <location>
        <begin position="6"/>
        <end position="7"/>
    </location>
</feature>
<feature type="mutagenesis site" description="Sensitive in DMS protection of U1 snRNA; when associated with 65-D--L-67." evidence="6">
    <original>L</original>
    <variation>I</variation>
    <location>
        <position position="63"/>
    </location>
</feature>
<feature type="mutagenesis site" description="Sensitive in DMS protection of U1 snRNA; when associated with I-63." evidence="6">
    <original>VSI</original>
    <variation>DIL</variation>
    <location>
        <begin position="65"/>
        <end position="67"/>
    </location>
</feature>
<feature type="mutagenesis site" description="Sensitive in DMS protection of U1 snRNA." evidence="6">
    <original>RSSK</original>
    <variation>LKTM</variation>
    <location>
        <begin position="69"/>
        <end position="72"/>
    </location>
</feature>
<feature type="mutagenesis site" description="Sensitive in DMS protection of U1 snRNA; when associated with 79-V-I-80." evidence="6">
    <original>TN</original>
    <variation>RG</variation>
    <location>
        <begin position="74"/>
        <end position="75"/>
    </location>
</feature>
<feature type="mutagenesis site" description="Sensitive in DMS protection of U1 snRNA; when associated with 74-R-G-75." evidence="6">
    <original>LT</original>
    <variation>VI</variation>
    <location>
        <begin position="79"/>
        <end position="80"/>
    </location>
</feature>
<feature type="mutagenesis site" description="Splicing defects; when associated with 230-F--T-232." evidence="6">
    <original>V</original>
    <variation>I</variation>
    <location>
        <position position="228"/>
    </location>
</feature>
<feature type="mutagenesis site" description="Splicing defects; when associated with I-228." evidence="6">
    <original>LIQ</original>
    <variation>FLT</variation>
    <location>
        <begin position="230"/>
        <end position="232"/>
    </location>
</feature>
<feature type="mutagenesis site" description="Splicing defects." evidence="6">
    <original>VSV</original>
    <variation>PGH</variation>
    <location>
        <begin position="258"/>
        <end position="260"/>
    </location>
</feature>
<feature type="mutagenesis site" description="Splicing defects; when associated with F-268." evidence="6">
    <original>NL</original>
    <variation>DI</variation>
    <location>
        <begin position="262"/>
        <end position="263"/>
    </location>
</feature>
<feature type="mutagenesis site" description="Splicing defects; when associated with 262-D-I-263." evidence="6">
    <original>Y</original>
    <variation>F</variation>
    <location>
        <position position="268"/>
    </location>
</feature>
<feature type="mutagenesis site" description="Splicing defects; when associated with S-295." evidence="6">
    <original>DVT</original>
    <variation>AMK</variation>
    <location>
        <begin position="291"/>
        <end position="293"/>
    </location>
</feature>
<feature type="mutagenesis site" description="Splicing defects; when associated with 291-A--K-293." evidence="6">
    <original>G</original>
    <variation>S</variation>
    <location>
        <position position="295"/>
    </location>
</feature>
<feature type="sequence conflict" description="In Ref. 2; CAA55621." evidence="8" ref="2">
    <original>MSA</original>
    <variation>MTNKNR</variation>
    <location>
        <begin position="1"/>
        <end position="3"/>
    </location>
</feature>
<feature type="strand" evidence="10">
    <location>
        <begin position="3"/>
        <end position="6"/>
    </location>
</feature>
<feature type="helix" evidence="10">
    <location>
        <begin position="16"/>
        <end position="27"/>
    </location>
</feature>
<feature type="strand" evidence="10">
    <location>
        <begin position="28"/>
        <end position="30"/>
    </location>
</feature>
<feature type="helix" evidence="10">
    <location>
        <begin position="32"/>
        <end position="35"/>
    </location>
</feature>
<feature type="turn" evidence="10">
    <location>
        <begin position="59"/>
        <end position="61"/>
    </location>
</feature>
<feature type="strand" evidence="10">
    <location>
        <begin position="62"/>
        <end position="66"/>
    </location>
</feature>
<feature type="strand" evidence="10">
    <location>
        <begin position="73"/>
        <end position="75"/>
    </location>
</feature>
<feature type="strand" evidence="10">
    <location>
        <begin position="77"/>
        <end position="83"/>
    </location>
</feature>
<feature type="helix" evidence="10">
    <location>
        <begin position="84"/>
        <end position="94"/>
    </location>
</feature>
<feature type="strand" evidence="9">
    <location>
        <begin position="102"/>
        <end position="105"/>
    </location>
</feature>
<feature type="strand" evidence="10">
    <location>
        <begin position="108"/>
        <end position="110"/>
    </location>
</feature>
<feature type="helix" evidence="10">
    <location>
        <begin position="116"/>
        <end position="124"/>
    </location>
</feature>
<feature type="helix" evidence="10">
    <location>
        <begin position="134"/>
        <end position="147"/>
    </location>
</feature>
<sequence length="298" mass="34378">MSALYFQNLPSRPANKENYTRLLLKHINPNNKYAINPSLPLPHNKLQISSQPLMLLDDQMGLLEVSISRSSKMTNQAFLTFVTQEEADRFLEKYTTTALKVQGRKVRMGKARTNSLLGLSIEMQKKKGNDETYNLDIKKVLKARKLKRKLRSDDICAKKFRLKRQIRRLKHKLRSRKVEEAEIDRIVKEFETRRLENMKSQQENLKQSQKPLKRAKVSNTMENPPNKVLLIQNLPSGTTEQLLSQILGNEALVEIRLVSVRNLAFVEYETVADATKIKNQLGSTYKLQNNDVTIGFAK</sequence>
<dbReference type="EMBL" id="X71061">
    <property type="protein sequence ID" value="CAA50378.1"/>
    <property type="molecule type" value="Genomic_DNA"/>
</dbReference>
<dbReference type="EMBL" id="X78993">
    <property type="protein sequence ID" value="CAA55621.1"/>
    <property type="molecule type" value="Genomic_DNA"/>
</dbReference>
<dbReference type="EMBL" id="Z35988">
    <property type="protein sequence ID" value="CAA85076.1"/>
    <property type="molecule type" value="Genomic_DNA"/>
</dbReference>
<dbReference type="EMBL" id="BK006936">
    <property type="protein sequence ID" value="DAA07237.1"/>
    <property type="molecule type" value="Genomic_DNA"/>
</dbReference>
<dbReference type="PIR" id="A46301">
    <property type="entry name" value="A46301"/>
</dbReference>
<dbReference type="RefSeq" id="NP_009677.1">
    <property type="nucleotide sequence ID" value="NM_001178467.1"/>
</dbReference>
<dbReference type="PDB" id="5ZWN">
    <property type="method" value="EM"/>
    <property type="resolution" value="3.30 A"/>
    <property type="chains" value="S=1-298"/>
</dbReference>
<dbReference type="PDB" id="6G90">
    <property type="method" value="EM"/>
    <property type="resolution" value="4.00 A"/>
    <property type="chains" value="A=1-298"/>
</dbReference>
<dbReference type="PDB" id="6N7P">
    <property type="method" value="EM"/>
    <property type="resolution" value="3.60 A"/>
    <property type="chains" value="C=1-298"/>
</dbReference>
<dbReference type="PDB" id="6N7R">
    <property type="method" value="EM"/>
    <property type="resolution" value="3.20 A"/>
    <property type="chains" value="C=1-298"/>
</dbReference>
<dbReference type="PDB" id="6N7X">
    <property type="method" value="EM"/>
    <property type="resolution" value="3.60 A"/>
    <property type="chains" value="C=1-298"/>
</dbReference>
<dbReference type="PDB" id="7OQC">
    <property type="method" value="EM"/>
    <property type="resolution" value="4.10 A"/>
    <property type="chains" value="A=1-298"/>
</dbReference>
<dbReference type="PDB" id="7OQE">
    <property type="method" value="EM"/>
    <property type="resolution" value="5.90 A"/>
    <property type="chains" value="A=1-298"/>
</dbReference>
<dbReference type="PDB" id="8W2O">
    <property type="method" value="EM"/>
    <property type="resolution" value="3.49 A"/>
    <property type="chains" value="C=1-298"/>
</dbReference>
<dbReference type="PDBsum" id="5ZWN"/>
<dbReference type="PDBsum" id="6G90"/>
<dbReference type="PDBsum" id="6N7P"/>
<dbReference type="PDBsum" id="6N7R"/>
<dbReference type="PDBsum" id="6N7X"/>
<dbReference type="PDBsum" id="7OQC"/>
<dbReference type="PDBsum" id="7OQE"/>
<dbReference type="PDBsum" id="8W2O"/>
<dbReference type="EMDB" id="EMD-0360"/>
<dbReference type="EMDB" id="EMD-0361"/>
<dbReference type="EMDB" id="EMD-13029"/>
<dbReference type="EMDB" id="EMD-13033"/>
<dbReference type="EMDB" id="EMD-4364"/>
<dbReference type="EMDB" id="EMD-43753"/>
<dbReference type="EMDB" id="EMD-6973"/>
<dbReference type="SMR" id="P32605"/>
<dbReference type="BioGRID" id="32821">
    <property type="interactions" value="205"/>
</dbReference>
<dbReference type="ComplexPortal" id="CPX-23">
    <property type="entry name" value="U1 small nuclear ribonucleoprotein complex"/>
</dbReference>
<dbReference type="DIP" id="DIP-223N"/>
<dbReference type="FunCoup" id="P32605">
    <property type="interactions" value="309"/>
</dbReference>
<dbReference type="IntAct" id="P32605">
    <property type="interactions" value="21"/>
</dbReference>
<dbReference type="MINT" id="P32605"/>
<dbReference type="STRING" id="4932.YBR119W"/>
<dbReference type="iPTMnet" id="P32605"/>
<dbReference type="PaxDb" id="4932-YBR119W"/>
<dbReference type="PeptideAtlas" id="P32605"/>
<dbReference type="EnsemblFungi" id="YBR119W_mRNA">
    <property type="protein sequence ID" value="YBR119W"/>
    <property type="gene ID" value="YBR119W"/>
</dbReference>
<dbReference type="GeneID" id="852416"/>
<dbReference type="KEGG" id="sce:YBR119W"/>
<dbReference type="AGR" id="SGD:S000000323"/>
<dbReference type="SGD" id="S000000323">
    <property type="gene designation" value="MUD1"/>
</dbReference>
<dbReference type="VEuPathDB" id="FungiDB:YBR119W"/>
<dbReference type="eggNOG" id="KOG0118">
    <property type="taxonomic scope" value="Eukaryota"/>
</dbReference>
<dbReference type="HOGENOM" id="CLU_057159_0_0_1"/>
<dbReference type="InParanoid" id="P32605"/>
<dbReference type="OMA" id="DDICAKK"/>
<dbReference type="OrthoDB" id="266020at2759"/>
<dbReference type="BioCyc" id="YEAST:G3O-29076-MONOMER"/>
<dbReference type="BioGRID-ORCS" id="852416">
    <property type="hits" value="1 hit in 10 CRISPR screens"/>
</dbReference>
<dbReference type="PRO" id="PR:P32605"/>
<dbReference type="Proteomes" id="UP000002311">
    <property type="component" value="Chromosome II"/>
</dbReference>
<dbReference type="RNAct" id="P32605">
    <property type="molecule type" value="protein"/>
</dbReference>
<dbReference type="GO" id="GO:0000243">
    <property type="term" value="C:commitment complex"/>
    <property type="evidence" value="ECO:0000303"/>
    <property type="project" value="ComplexPortal"/>
</dbReference>
<dbReference type="GO" id="GO:0005634">
    <property type="term" value="C:nucleus"/>
    <property type="evidence" value="ECO:0000303"/>
    <property type="project" value="ComplexPortal"/>
</dbReference>
<dbReference type="GO" id="GO:0005681">
    <property type="term" value="C:spliceosomal complex"/>
    <property type="evidence" value="ECO:0000303"/>
    <property type="project" value="ComplexPortal"/>
</dbReference>
<dbReference type="GO" id="GO:0005685">
    <property type="term" value="C:U1 snRNP"/>
    <property type="evidence" value="ECO:0000314"/>
    <property type="project" value="SGD"/>
</dbReference>
<dbReference type="GO" id="GO:0071004">
    <property type="term" value="C:U2-type prespliceosome"/>
    <property type="evidence" value="ECO:0000314"/>
    <property type="project" value="SGD"/>
</dbReference>
<dbReference type="GO" id="GO:0030619">
    <property type="term" value="F:U1 snRNA binding"/>
    <property type="evidence" value="ECO:0000316"/>
    <property type="project" value="SGD"/>
</dbReference>
<dbReference type="GO" id="GO:0000395">
    <property type="term" value="P:mRNA 5'-splice site recognition"/>
    <property type="evidence" value="ECO:0000303"/>
    <property type="project" value="ComplexPortal"/>
</dbReference>
<dbReference type="GO" id="GO:0000398">
    <property type="term" value="P:mRNA splicing, via spliceosome"/>
    <property type="evidence" value="ECO:0000316"/>
    <property type="project" value="SGD"/>
</dbReference>
<dbReference type="CDD" id="cd12247">
    <property type="entry name" value="RRM2_U1A_like"/>
    <property type="match status" value="1"/>
</dbReference>
<dbReference type="FunFam" id="3.30.70.330:FF:001215">
    <property type="entry name" value="Mud1p"/>
    <property type="match status" value="1"/>
</dbReference>
<dbReference type="Gene3D" id="3.30.70.330">
    <property type="match status" value="2"/>
</dbReference>
<dbReference type="InterPro" id="IPR012677">
    <property type="entry name" value="Nucleotide-bd_a/b_plait_sf"/>
</dbReference>
<dbReference type="InterPro" id="IPR035979">
    <property type="entry name" value="RBD_domain_sf"/>
</dbReference>
<dbReference type="InterPro" id="IPR000504">
    <property type="entry name" value="RRM_dom"/>
</dbReference>
<dbReference type="Pfam" id="PF00076">
    <property type="entry name" value="RRM_1"/>
    <property type="match status" value="1"/>
</dbReference>
<dbReference type="SMART" id="SM00360">
    <property type="entry name" value="RRM"/>
    <property type="match status" value="2"/>
</dbReference>
<dbReference type="SUPFAM" id="SSF54928">
    <property type="entry name" value="RNA-binding domain, RBD"/>
    <property type="match status" value="1"/>
</dbReference>
<dbReference type="PROSITE" id="PS50102">
    <property type="entry name" value="RRM"/>
    <property type="match status" value="2"/>
</dbReference>
<comment type="function">
    <text evidence="5 6">Involved in nuclear mRNA splicing. The principal role of the U1A is to help fold or maintain U1 RNA in an active configuration. It is the first snRNP to interact with pre-mRNA. This interaction is required for the subsequent binding of U2 snRNP and the U4/U6/U5 tri-snRNP.</text>
</comment>
<comment type="subunit">
    <text evidence="3 7">Component of the spliceosome where it is associated with snRNP U1.</text>
</comment>
<comment type="subcellular location">
    <subcellularLocation>
        <location evidence="1">Nucleus</location>
    </subcellularLocation>
</comment>
<comment type="miscellaneous">
    <text evidence="4">Present with 2950 molecules/cell in log phase SD medium.</text>
</comment>
<comment type="similarity">
    <text evidence="8">Belongs to the RRM U1 A/B'' family.</text>
</comment>
<organism>
    <name type="scientific">Saccharomyces cerevisiae (strain ATCC 204508 / S288c)</name>
    <name type="common">Baker's yeast</name>
    <dbReference type="NCBI Taxonomy" id="559292"/>
    <lineage>
        <taxon>Eukaryota</taxon>
        <taxon>Fungi</taxon>
        <taxon>Dikarya</taxon>
        <taxon>Ascomycota</taxon>
        <taxon>Saccharomycotina</taxon>
        <taxon>Saccharomycetes</taxon>
        <taxon>Saccharomycetales</taxon>
        <taxon>Saccharomycetaceae</taxon>
        <taxon>Saccharomyces</taxon>
    </lineage>
</organism>
<protein>
    <recommendedName>
        <fullName>U1 small nuclear ribonucleoprotein A</fullName>
        <shortName>U1 snRNP A</shortName>
        <shortName>U1-A</shortName>
        <shortName>U1A</shortName>
    </recommendedName>
    <alternativeName>
        <fullName>Mutant U1 die protein 1</fullName>
    </alternativeName>
</protein>
<reference key="1">
    <citation type="journal article" date="1993" name="Genes Dev.">
        <title>An enhancer screen identifies a gene that encodes the yeast U1 snRNP A protein: implications for snRNP protein function in pre-mRNA splicing.</title>
        <authorList>
            <person name="Liao X.C."/>
            <person name="Tang J."/>
            <person name="Rosbash M."/>
        </authorList>
    </citation>
    <scope>NUCLEOTIDE SEQUENCE [GENOMIC DNA]</scope>
    <scope>FUNCTION</scope>
    <scope>INTERACTION WITH U1 SNRNA</scope>
    <source>
        <strain>XLY219</strain>
    </source>
</reference>
<reference key="2">
    <citation type="journal article" date="1994" name="Yeast">
        <title>Analysis of a 70 kb region on the right arm of yeast chromosome II.</title>
        <authorList>
            <person name="Mannhaupt G."/>
            <person name="Stucka R."/>
            <person name="Ehnle S."/>
            <person name="Vetter I."/>
            <person name="Feldmann H."/>
        </authorList>
    </citation>
    <scope>NUCLEOTIDE SEQUENCE [GENOMIC DNA]</scope>
    <source>
        <strain>ATCC 204508 / S288c</strain>
    </source>
</reference>
<reference key="3">
    <citation type="journal article" date="1994" name="EMBO J.">
        <title>Complete DNA sequence of yeast chromosome II.</title>
        <authorList>
            <person name="Feldmann H."/>
            <person name="Aigle M."/>
            <person name="Aljinovic G."/>
            <person name="Andre B."/>
            <person name="Baclet M.C."/>
            <person name="Barthe C."/>
            <person name="Baur A."/>
            <person name="Becam A.-M."/>
            <person name="Biteau N."/>
            <person name="Boles E."/>
            <person name="Brandt T."/>
            <person name="Brendel M."/>
            <person name="Brueckner M."/>
            <person name="Bussereau F."/>
            <person name="Christiansen C."/>
            <person name="Contreras R."/>
            <person name="Crouzet M."/>
            <person name="Cziepluch C."/>
            <person name="Demolis N."/>
            <person name="Delaveau T."/>
            <person name="Doignon F."/>
            <person name="Domdey H."/>
            <person name="Duesterhus S."/>
            <person name="Dubois E."/>
            <person name="Dujon B."/>
            <person name="El Bakkoury M."/>
            <person name="Entian K.-D."/>
            <person name="Feuermann M."/>
            <person name="Fiers W."/>
            <person name="Fobo G.M."/>
            <person name="Fritz C."/>
            <person name="Gassenhuber J."/>
            <person name="Glansdorff N."/>
            <person name="Goffeau A."/>
            <person name="Grivell L.A."/>
            <person name="de Haan M."/>
            <person name="Hein C."/>
            <person name="Herbert C.J."/>
            <person name="Hollenberg C.P."/>
            <person name="Holmstroem K."/>
            <person name="Jacq C."/>
            <person name="Jacquet M."/>
            <person name="Jauniaux J.-C."/>
            <person name="Jonniaux J.-L."/>
            <person name="Kallesoee T."/>
            <person name="Kiesau P."/>
            <person name="Kirchrath L."/>
            <person name="Koetter P."/>
            <person name="Korol S."/>
            <person name="Liebl S."/>
            <person name="Logghe M."/>
            <person name="Lohan A.J.E."/>
            <person name="Louis E.J."/>
            <person name="Li Z.Y."/>
            <person name="Maat M.J."/>
            <person name="Mallet L."/>
            <person name="Mannhaupt G."/>
            <person name="Messenguy F."/>
            <person name="Miosga T."/>
            <person name="Molemans F."/>
            <person name="Mueller S."/>
            <person name="Nasr F."/>
            <person name="Obermaier B."/>
            <person name="Perea J."/>
            <person name="Pierard A."/>
            <person name="Piravandi E."/>
            <person name="Pohl F.M."/>
            <person name="Pohl T.M."/>
            <person name="Potier S."/>
            <person name="Proft M."/>
            <person name="Purnelle B."/>
            <person name="Ramezani Rad M."/>
            <person name="Rieger M."/>
            <person name="Rose M."/>
            <person name="Schaaff-Gerstenschlaeger I."/>
            <person name="Scherens B."/>
            <person name="Schwarzlose C."/>
            <person name="Skala J."/>
            <person name="Slonimski P.P."/>
            <person name="Smits P.H.M."/>
            <person name="Souciet J.-L."/>
            <person name="Steensma H.Y."/>
            <person name="Stucka R."/>
            <person name="Urrestarazu L.A."/>
            <person name="van der Aart Q.J.M."/>
            <person name="Van Dyck L."/>
            <person name="Vassarotti A."/>
            <person name="Vetter I."/>
            <person name="Vierendeels F."/>
            <person name="Vissers S."/>
            <person name="Wagner G."/>
            <person name="de Wergifosse P."/>
            <person name="Wolfe K.H."/>
            <person name="Zagulski M."/>
            <person name="Zimmermann F.K."/>
            <person name="Mewes H.-W."/>
            <person name="Kleine K."/>
        </authorList>
    </citation>
    <scope>NUCLEOTIDE SEQUENCE [LARGE SCALE GENOMIC DNA]</scope>
    <source>
        <strain>ATCC 204508 / S288c</strain>
    </source>
</reference>
<reference key="4">
    <citation type="journal article" date="2014" name="G3 (Bethesda)">
        <title>The reference genome sequence of Saccharomyces cerevisiae: Then and now.</title>
        <authorList>
            <person name="Engel S.R."/>
            <person name="Dietrich F.S."/>
            <person name="Fisk D.G."/>
            <person name="Binkley G."/>
            <person name="Balakrishnan R."/>
            <person name="Costanzo M.C."/>
            <person name="Dwight S.S."/>
            <person name="Hitz B.C."/>
            <person name="Karra K."/>
            <person name="Nash R.S."/>
            <person name="Weng S."/>
            <person name="Wong E.D."/>
            <person name="Lloyd P."/>
            <person name="Skrzypek M.S."/>
            <person name="Miyasato S.R."/>
            <person name="Simison M."/>
            <person name="Cherry J.M."/>
        </authorList>
    </citation>
    <scope>GENOME REANNOTATION</scope>
    <source>
        <strain>ATCC 204508 / S288c</strain>
    </source>
</reference>
<reference key="5">
    <citation type="journal article" date="1996" name="RNA">
        <title>Characterization of yeast U1 snRNP A protein: identification of the N-terminal RNA binding domain (RBD) binding site and evidence that the C-terminal RBD functions in splicing.</title>
        <authorList>
            <person name="Tang J."/>
            <person name="Rosbash M."/>
        </authorList>
    </citation>
    <scope>FUNCTION</scope>
    <scope>U1 SNRNA-BINDING</scope>
    <scope>MUTAGENESIS OF LEU-4; 6-PHE-GLN-7; LEU-63; 65-VAL--ILE-67; 69-ARG--LYS-72; 74-THR-ASN-75; 79-LEU-THR-80; VAL-228; 230-LEU--GLN-232; 258-VAL--VAL-260; 262-ASN-LEU-263; TYR-268; 291-ASP--THR-293 AND GLY-295</scope>
</reference>
<reference key="6">
    <citation type="journal article" date="1997" name="Proc. Natl. Acad. Sci. U.S.A.">
        <title>Identification of the proteins of the yeast U1 small nuclear ribonucleoprotein complex by mass spectrometry.</title>
        <authorList>
            <person name="Neubauer G."/>
            <person name="Gottschalk A."/>
            <person name="Fabrizio P."/>
            <person name="Seraphin B."/>
            <person name="Luehrmann R."/>
            <person name="Mann M."/>
        </authorList>
    </citation>
    <scope>IDENTIFICATION IN U1 SNRNP BY MASS SPECTROMETRY</scope>
</reference>
<reference key="7">
    <citation type="journal article" date="2002" name="Mol. Cell">
        <title>Composition and functional characterization of the yeast spliceosomal penta-snRNP.</title>
        <authorList>
            <person name="Stevens S.W."/>
            <person name="Ryan D.E."/>
            <person name="Ge H.Y."/>
            <person name="Moore R.E."/>
            <person name="Young M.K."/>
            <person name="Lee T.D."/>
            <person name="Abelson J."/>
        </authorList>
    </citation>
    <scope>IDENTIFICATION IN U1 SNRNP BY MASS SPECTROMETRY</scope>
</reference>
<reference key="8">
    <citation type="journal article" date="2003" name="Nature">
        <title>Global analysis of protein localization in budding yeast.</title>
        <authorList>
            <person name="Huh W.-K."/>
            <person name="Falvo J.V."/>
            <person name="Gerke L.C."/>
            <person name="Carroll A.S."/>
            <person name="Howson R.W."/>
            <person name="Weissman J.S."/>
            <person name="O'Shea E.K."/>
        </authorList>
    </citation>
    <scope>SUBCELLULAR LOCATION [LARGE SCALE ANALYSIS]</scope>
</reference>
<reference key="9">
    <citation type="journal article" date="2003" name="Nature">
        <title>Global analysis of protein expression in yeast.</title>
        <authorList>
            <person name="Ghaemmaghami S."/>
            <person name="Huh W.-K."/>
            <person name="Bower K."/>
            <person name="Howson R.W."/>
            <person name="Belle A."/>
            <person name="Dephoure N."/>
            <person name="O'Shea E.K."/>
            <person name="Weissman J.S."/>
        </authorList>
    </citation>
    <scope>LEVEL OF PROTEIN EXPRESSION [LARGE SCALE ANALYSIS]</scope>
</reference>
<name>RU1A_YEAST</name>